<keyword id="KW-0028">Amino-acid biosynthesis</keyword>
<keyword id="KW-0963">Cytoplasm</keyword>
<keyword id="KW-0486">Methionine biosynthesis</keyword>
<keyword id="KW-0663">Pyridoxal phosphate</keyword>
<keyword id="KW-1185">Reference proteome</keyword>
<keyword id="KW-0808">Transferase</keyword>
<feature type="chain" id="PRO_0000114761" description="Cystathionine gamma-synthase">
    <location>
        <begin position="1"/>
        <end position="388"/>
    </location>
</feature>
<feature type="modified residue" description="N6-(pyridoxal phosphate)lysine" evidence="1">
    <location>
        <position position="208"/>
    </location>
</feature>
<accession>P46807</accession>
<sequence>MSEDYRGHHGITGLATKAIHAGYRPDPATGAVNVPIYASSTFAQDGVGELRGGFEYARTGNPMRAALEASLATVEEGVFARAFSSGMAASDCALRVMLRPGDHVIIPDDVYGGTFRLIDKVFTQWNVDYTPVPLSDLDAVRAAITSRTRLIWVETPTNPLLSIADITSIGELGKKHSVKVLVDNTFASPALQQPLMLGADVVLHSTTKYIGGHSDVVGGALVTNDEELDQAFGFLQNGAGAVPSPFDAYLTMRGLKTLVLRMQRHNENAITVAEFLAGHPSVSAVLYPGLPSHPGHEVAARQMRGFGGMVSLRMRAGRLAAQDLCARTKVFTLAESLGGVESLIEQPSAMTHASTTGSQLEVPDDLVRLSVGIEDVGDLLCDLKQALN</sequence>
<comment type="function">
    <text evidence="1">Catalyzes the formation of L-cystathionine from O-succinyl-L-homoserine (OSHS) and L-cysteine, via a gamma-replacement reaction. In the absence of thiol, catalyzes gamma-elimination to form 2-oxobutanoate, succinate and ammonia (By similarity).</text>
</comment>
<comment type="catalytic activity">
    <reaction>
        <text>O-succinyl-L-homoserine + L-cysteine = L,L-cystathionine + succinate + H(+)</text>
        <dbReference type="Rhea" id="RHEA:20397"/>
        <dbReference type="ChEBI" id="CHEBI:15378"/>
        <dbReference type="ChEBI" id="CHEBI:30031"/>
        <dbReference type="ChEBI" id="CHEBI:35235"/>
        <dbReference type="ChEBI" id="CHEBI:57661"/>
        <dbReference type="ChEBI" id="CHEBI:58161"/>
        <dbReference type="EC" id="2.5.1.48"/>
    </reaction>
</comment>
<comment type="cofactor">
    <cofactor evidence="1">
        <name>pyridoxal 5'-phosphate</name>
        <dbReference type="ChEBI" id="CHEBI:597326"/>
    </cofactor>
    <text evidence="1">Binds 1 pyridoxal phosphate per subunit.</text>
</comment>
<comment type="subunit">
    <text evidence="1">Homotetramer.</text>
</comment>
<comment type="subcellular location">
    <subcellularLocation>
        <location evidence="1">Cytoplasm</location>
    </subcellularLocation>
</comment>
<comment type="similarity">
    <text evidence="2">Belongs to the trans-sulfuration enzymes family.</text>
</comment>
<proteinExistence type="inferred from homology"/>
<name>METB_MYCLE</name>
<gene>
    <name type="primary">metB</name>
    <name type="ordered locus">ML2394</name>
</gene>
<protein>
    <recommendedName>
        <fullName>Cystathionine gamma-synthase</fullName>
        <shortName>CGS</shortName>
        <ecNumber>2.5.1.48</ecNumber>
    </recommendedName>
    <alternativeName>
        <fullName>O-succinylhomoserine (thiol)-lyase</fullName>
    </alternativeName>
</protein>
<dbReference type="EC" id="2.5.1.48"/>
<dbReference type="EMBL" id="U15183">
    <property type="protein sequence ID" value="AAA63036.1"/>
    <property type="molecule type" value="Genomic_DNA"/>
</dbReference>
<dbReference type="EMBL" id="AL583925">
    <property type="protein sequence ID" value="CAC31910.1"/>
    <property type="molecule type" value="Genomic_DNA"/>
</dbReference>
<dbReference type="PIR" id="F87208">
    <property type="entry name" value="F87208"/>
</dbReference>
<dbReference type="RefSeq" id="NP_302550.1">
    <property type="nucleotide sequence ID" value="NC_002677.1"/>
</dbReference>
<dbReference type="RefSeq" id="WP_010908870.1">
    <property type="nucleotide sequence ID" value="NC_002677.1"/>
</dbReference>
<dbReference type="SMR" id="P46807"/>
<dbReference type="STRING" id="272631.gene:17576256"/>
<dbReference type="KEGG" id="mle:ML2394"/>
<dbReference type="PATRIC" id="fig|272631.5.peg.4607"/>
<dbReference type="Leproma" id="ML2394"/>
<dbReference type="eggNOG" id="COG0626">
    <property type="taxonomic scope" value="Bacteria"/>
</dbReference>
<dbReference type="HOGENOM" id="CLU_018986_2_0_11"/>
<dbReference type="OrthoDB" id="9780685at2"/>
<dbReference type="Proteomes" id="UP000000806">
    <property type="component" value="Chromosome"/>
</dbReference>
<dbReference type="GO" id="GO:0005737">
    <property type="term" value="C:cytoplasm"/>
    <property type="evidence" value="ECO:0007669"/>
    <property type="project" value="UniProtKB-SubCell"/>
</dbReference>
<dbReference type="GO" id="GO:0004123">
    <property type="term" value="F:cystathionine gamma-lyase activity"/>
    <property type="evidence" value="ECO:0007669"/>
    <property type="project" value="TreeGrafter"/>
</dbReference>
<dbReference type="GO" id="GO:0003962">
    <property type="term" value="F:cystathionine gamma-synthase activity"/>
    <property type="evidence" value="ECO:0007669"/>
    <property type="project" value="UniProtKB-EC"/>
</dbReference>
<dbReference type="GO" id="GO:0030170">
    <property type="term" value="F:pyridoxal phosphate binding"/>
    <property type="evidence" value="ECO:0007669"/>
    <property type="project" value="InterPro"/>
</dbReference>
<dbReference type="GO" id="GO:0019343">
    <property type="term" value="P:cysteine biosynthetic process via cystathionine"/>
    <property type="evidence" value="ECO:0007669"/>
    <property type="project" value="TreeGrafter"/>
</dbReference>
<dbReference type="GO" id="GO:0009086">
    <property type="term" value="P:methionine biosynthetic process"/>
    <property type="evidence" value="ECO:0007669"/>
    <property type="project" value="UniProtKB-KW"/>
</dbReference>
<dbReference type="GO" id="GO:0019346">
    <property type="term" value="P:transsulfuration"/>
    <property type="evidence" value="ECO:0007669"/>
    <property type="project" value="InterPro"/>
</dbReference>
<dbReference type="CDD" id="cd00614">
    <property type="entry name" value="CGS_like"/>
    <property type="match status" value="1"/>
</dbReference>
<dbReference type="FunFam" id="3.90.1150.10:FF:000008">
    <property type="entry name" value="Cystathionine gamma-synthase"/>
    <property type="match status" value="1"/>
</dbReference>
<dbReference type="FunFam" id="3.40.640.10:FF:000009">
    <property type="entry name" value="Cystathionine gamma-synthase homolog"/>
    <property type="match status" value="1"/>
</dbReference>
<dbReference type="Gene3D" id="3.90.1150.10">
    <property type="entry name" value="Aspartate Aminotransferase, domain 1"/>
    <property type="match status" value="1"/>
</dbReference>
<dbReference type="Gene3D" id="3.40.640.10">
    <property type="entry name" value="Type I PLP-dependent aspartate aminotransferase-like (Major domain)"/>
    <property type="match status" value="1"/>
</dbReference>
<dbReference type="InterPro" id="IPR000277">
    <property type="entry name" value="Cys/Met-Metab_PyrdxlP-dep_enz"/>
</dbReference>
<dbReference type="InterPro" id="IPR054542">
    <property type="entry name" value="Cys_met_metab_PP"/>
</dbReference>
<dbReference type="InterPro" id="IPR015424">
    <property type="entry name" value="PyrdxlP-dep_Trfase"/>
</dbReference>
<dbReference type="InterPro" id="IPR015421">
    <property type="entry name" value="PyrdxlP-dep_Trfase_major"/>
</dbReference>
<dbReference type="InterPro" id="IPR015422">
    <property type="entry name" value="PyrdxlP-dep_Trfase_small"/>
</dbReference>
<dbReference type="NCBIfam" id="NF005871">
    <property type="entry name" value="PRK07811.1"/>
    <property type="match status" value="1"/>
</dbReference>
<dbReference type="PANTHER" id="PTHR11808:SF15">
    <property type="entry name" value="CYSTATHIONINE GAMMA-LYASE"/>
    <property type="match status" value="1"/>
</dbReference>
<dbReference type="PANTHER" id="PTHR11808">
    <property type="entry name" value="TRANS-SULFURATION ENZYME FAMILY MEMBER"/>
    <property type="match status" value="1"/>
</dbReference>
<dbReference type="Pfam" id="PF01053">
    <property type="entry name" value="Cys_Met_Meta_PP"/>
    <property type="match status" value="1"/>
</dbReference>
<dbReference type="PIRSF" id="PIRSF001434">
    <property type="entry name" value="CGS"/>
    <property type="match status" value="1"/>
</dbReference>
<dbReference type="SUPFAM" id="SSF53383">
    <property type="entry name" value="PLP-dependent transferases"/>
    <property type="match status" value="1"/>
</dbReference>
<dbReference type="PROSITE" id="PS00868">
    <property type="entry name" value="CYS_MET_METAB_PP"/>
    <property type="match status" value="1"/>
</dbReference>
<evidence type="ECO:0000250" key="1"/>
<evidence type="ECO:0000305" key="2"/>
<reference key="1">
    <citation type="submission" date="1994-09" db="EMBL/GenBank/DDBJ databases">
        <authorList>
            <person name="Smith D.R."/>
            <person name="Robison K."/>
        </authorList>
    </citation>
    <scope>NUCLEOTIDE SEQUENCE [GENOMIC DNA]</scope>
</reference>
<reference key="2">
    <citation type="journal article" date="2001" name="Nature">
        <title>Massive gene decay in the leprosy bacillus.</title>
        <authorList>
            <person name="Cole S.T."/>
            <person name="Eiglmeier K."/>
            <person name="Parkhill J."/>
            <person name="James K.D."/>
            <person name="Thomson N.R."/>
            <person name="Wheeler P.R."/>
            <person name="Honore N."/>
            <person name="Garnier T."/>
            <person name="Churcher C.M."/>
            <person name="Harris D.E."/>
            <person name="Mungall K.L."/>
            <person name="Basham D."/>
            <person name="Brown D."/>
            <person name="Chillingworth T."/>
            <person name="Connor R."/>
            <person name="Davies R.M."/>
            <person name="Devlin K."/>
            <person name="Duthoy S."/>
            <person name="Feltwell T."/>
            <person name="Fraser A."/>
            <person name="Hamlin N."/>
            <person name="Holroyd S."/>
            <person name="Hornsby T."/>
            <person name="Jagels K."/>
            <person name="Lacroix C."/>
            <person name="Maclean J."/>
            <person name="Moule S."/>
            <person name="Murphy L.D."/>
            <person name="Oliver K."/>
            <person name="Quail M.A."/>
            <person name="Rajandream M.A."/>
            <person name="Rutherford K.M."/>
            <person name="Rutter S."/>
            <person name="Seeger K."/>
            <person name="Simon S."/>
            <person name="Simmonds M."/>
            <person name="Skelton J."/>
            <person name="Squares R."/>
            <person name="Squares S."/>
            <person name="Stevens K."/>
            <person name="Taylor K."/>
            <person name="Whitehead S."/>
            <person name="Woodward J.R."/>
            <person name="Barrell B.G."/>
        </authorList>
    </citation>
    <scope>NUCLEOTIDE SEQUENCE [LARGE SCALE GENOMIC DNA]</scope>
    <source>
        <strain>TN</strain>
    </source>
</reference>
<organism>
    <name type="scientific">Mycobacterium leprae (strain TN)</name>
    <dbReference type="NCBI Taxonomy" id="272631"/>
    <lineage>
        <taxon>Bacteria</taxon>
        <taxon>Bacillati</taxon>
        <taxon>Actinomycetota</taxon>
        <taxon>Actinomycetes</taxon>
        <taxon>Mycobacteriales</taxon>
        <taxon>Mycobacteriaceae</taxon>
        <taxon>Mycobacterium</taxon>
    </lineage>
</organism>